<feature type="chain" id="PRO_0000185256" description="Acetylornithine deacetylase">
    <location>
        <begin position="1"/>
        <end position="447"/>
    </location>
</feature>
<feature type="active site" evidence="1">
    <location>
        <position position="105"/>
    </location>
</feature>
<feature type="active site" description="Proton acceptor" evidence="1">
    <location>
        <position position="169"/>
    </location>
</feature>
<feature type="binding site" evidence="1">
    <location>
        <position position="103"/>
    </location>
    <ligand>
        <name>Zn(2+)</name>
        <dbReference type="ChEBI" id="CHEBI:29105"/>
        <label>1</label>
    </ligand>
</feature>
<feature type="binding site" evidence="1">
    <location>
        <position position="135"/>
    </location>
    <ligand>
        <name>Zn(2+)</name>
        <dbReference type="ChEBI" id="CHEBI:29105"/>
        <label>1</label>
    </ligand>
</feature>
<feature type="binding site" evidence="1">
    <location>
        <position position="135"/>
    </location>
    <ligand>
        <name>Zn(2+)</name>
        <dbReference type="ChEBI" id="CHEBI:29105"/>
        <label>2</label>
    </ligand>
</feature>
<feature type="binding site" evidence="1">
    <location>
        <position position="170"/>
    </location>
    <ligand>
        <name>Zn(2+)</name>
        <dbReference type="ChEBI" id="CHEBI:29105"/>
        <label>2</label>
    </ligand>
</feature>
<feature type="binding site" evidence="1">
    <location>
        <position position="419"/>
    </location>
    <ligand>
        <name>Zn(2+)</name>
        <dbReference type="ChEBI" id="CHEBI:29105"/>
        <label>2</label>
    </ligand>
</feature>
<feature type="sequence conflict" description="In Ref. 1; AAB04942." evidence="4" ref="1">
    <original>P</original>
    <variation>S</variation>
    <location>
        <position position="53"/>
    </location>
</feature>
<feature type="sequence conflict" description="In Ref. 1; AAB04942." evidence="4" ref="1">
    <original>E</original>
    <variation>A</variation>
    <location>
        <position position="63"/>
    </location>
</feature>
<feature type="sequence conflict" description="In Ref. 1; AAB04942." evidence="4" ref="1">
    <original>G</original>
    <variation>GG</variation>
    <location>
        <position position="212"/>
    </location>
</feature>
<feature type="sequence conflict" description="In Ref. 1; AAB04942." evidence="4" ref="1">
    <original>D</original>
    <variation>N</variation>
    <location>
        <position position="254"/>
    </location>
</feature>
<feature type="sequence conflict" description="In Ref. 1; AAB04942." evidence="4" ref="1">
    <original>R</original>
    <variation>L</variation>
    <location>
        <position position="398"/>
    </location>
</feature>
<evidence type="ECO:0000250" key="1"/>
<evidence type="ECO:0000269" key="2">
    <source>
    </source>
</evidence>
<evidence type="ECO:0000269" key="3">
    <source>
    </source>
</evidence>
<evidence type="ECO:0000305" key="4"/>
<keyword id="KW-0028">Amino-acid biosynthesis</keyword>
<keyword id="KW-0055">Arginine biosynthesis</keyword>
<keyword id="KW-0170">Cobalt</keyword>
<keyword id="KW-0378">Hydrolase</keyword>
<keyword id="KW-0479">Metal-binding</keyword>
<keyword id="KW-1185">Reference proteome</keyword>
<keyword id="KW-0862">Zinc</keyword>
<name>ARGE_DICDI</name>
<sequence length="447" mass="49070">MTKPVASYELDEKRFLTLLGKLIGETENLQNRPPALIPIEDNAGRHVIEALTPYLKANGGVLELEQVHCDPVNYPKRGNIIIEYPGTSKGTSSPKTISFVGSHLDVVPADKTAWDRNPFQLIIEGDKLYGRGTTDCLGHVALLTDLFIQLATEKPALKHSIFAVFIVSEENDEIPGIGVDALDHSGKMNPCKNGPVYWVDSADSQPTIGTGGAQTWNLTAHGKNMHSAMPYRTVNSVELVNEALAEIQRRFYIDFKPHPKEAEYKFDCSSTMKPTLWKPIAGSYNTIPGESTICGDIRLTPFYDMKEMRAKVEGYIKDINANITELRNRGPYSKYDVPASEGVEPVKGSVSIEWLGEASAGVACKLDSDGYKALGKATSEILGSLTPVATCGTLPLVRDLQDSGFDIQITGFGKEETYHADNEYALLSDFKNAIKILSRTIDLLEKN</sequence>
<accession>P54638</accession>
<accession>Q55GM1</accession>
<protein>
    <recommendedName>
        <fullName>Acetylornithine deacetylase</fullName>
        <ecNumber>3.5.1.16</ecNumber>
    </recommendedName>
    <alternativeName>
        <fullName>N-acetylornithinase</fullName>
        <shortName>AO</shortName>
        <shortName>Acetylornithinase</shortName>
        <shortName>NAO</shortName>
    </alternativeName>
</protein>
<comment type="catalytic activity">
    <reaction>
        <text>N(2)-acetyl-L-ornithine + H2O = L-ornithine + acetate</text>
        <dbReference type="Rhea" id="RHEA:15941"/>
        <dbReference type="ChEBI" id="CHEBI:15377"/>
        <dbReference type="ChEBI" id="CHEBI:30089"/>
        <dbReference type="ChEBI" id="CHEBI:46911"/>
        <dbReference type="ChEBI" id="CHEBI:57805"/>
        <dbReference type="EC" id="3.5.1.16"/>
    </reaction>
</comment>
<comment type="cofactor">
    <cofactor evidence="1">
        <name>Zn(2+)</name>
        <dbReference type="ChEBI" id="CHEBI:29105"/>
    </cofactor>
    <cofactor evidence="1">
        <name>Co(2+)</name>
        <dbReference type="ChEBI" id="CHEBI:48828"/>
    </cofactor>
    <text evidence="1">Binds 2 Zn(2+) or Co(2+) ions per subunit.</text>
</comment>
<comment type="pathway">
    <text>Amino-acid biosynthesis; L-arginine biosynthesis; L-ornithine from N(2)-acetyl-L-ornithine (linear): step 1/1.</text>
</comment>
<comment type="subunit">
    <text evidence="1">Homodimer.</text>
</comment>
<comment type="developmental stage">
    <text evidence="2 3">Expressed during development. Expression levels decrease steadily from the initiation of development until culmination. Levels increase after 18 hours of development and peak at 22 hours, after which they decrease again.</text>
</comment>
<comment type="similarity">
    <text evidence="4">Belongs to the peptidase M20A family. ArgE subfamily.</text>
</comment>
<dbReference type="EC" id="3.5.1.16"/>
<dbReference type="EMBL" id="U23957">
    <property type="protein sequence ID" value="AAB04942.1"/>
    <property type="molecule type" value="mRNA"/>
</dbReference>
<dbReference type="EMBL" id="AAFI02000003">
    <property type="protein sequence ID" value="EAL73142.1"/>
    <property type="molecule type" value="Genomic_DNA"/>
</dbReference>
<dbReference type="RefSeq" id="XP_647163.1">
    <property type="nucleotide sequence ID" value="XM_642071.1"/>
</dbReference>
<dbReference type="SMR" id="P54638"/>
<dbReference type="FunCoup" id="P54638">
    <property type="interactions" value="66"/>
</dbReference>
<dbReference type="STRING" id="44689.P54638"/>
<dbReference type="PaxDb" id="44689-DDB0191165"/>
<dbReference type="EnsemblProtists" id="EAL73142">
    <property type="protein sequence ID" value="EAL73142"/>
    <property type="gene ID" value="DDB_G0267380"/>
</dbReference>
<dbReference type="GeneID" id="8615966"/>
<dbReference type="KEGG" id="ddi:DDB_G0267380"/>
<dbReference type="dictyBase" id="DDB_G0267380">
    <property type="gene designation" value="argE"/>
</dbReference>
<dbReference type="VEuPathDB" id="AmoebaDB:DDB_G0267380"/>
<dbReference type="eggNOG" id="KOG2276">
    <property type="taxonomic scope" value="Eukaryota"/>
</dbReference>
<dbReference type="HOGENOM" id="CLU_051591_0_0_1"/>
<dbReference type="InParanoid" id="P54638"/>
<dbReference type="OMA" id="NEYCLFT"/>
<dbReference type="PhylomeDB" id="P54638"/>
<dbReference type="UniPathway" id="UPA00068">
    <property type="reaction ID" value="UER00110"/>
</dbReference>
<dbReference type="PRO" id="PR:P54638"/>
<dbReference type="Proteomes" id="UP000002195">
    <property type="component" value="Chromosome 1"/>
</dbReference>
<dbReference type="GO" id="GO:0031012">
    <property type="term" value="C:extracellular matrix"/>
    <property type="evidence" value="ECO:0007005"/>
    <property type="project" value="dictyBase"/>
</dbReference>
<dbReference type="GO" id="GO:0045335">
    <property type="term" value="C:phagocytic vesicle"/>
    <property type="evidence" value="ECO:0007005"/>
    <property type="project" value="dictyBase"/>
</dbReference>
<dbReference type="GO" id="GO:0008777">
    <property type="term" value="F:acetylornithine deacetylase activity"/>
    <property type="evidence" value="ECO:0000318"/>
    <property type="project" value="GO_Central"/>
</dbReference>
<dbReference type="GO" id="GO:0046872">
    <property type="term" value="F:metal ion binding"/>
    <property type="evidence" value="ECO:0007669"/>
    <property type="project" value="UniProtKB-KW"/>
</dbReference>
<dbReference type="GO" id="GO:0006526">
    <property type="term" value="P:L-arginine biosynthetic process"/>
    <property type="evidence" value="ECO:0007669"/>
    <property type="project" value="UniProtKB-UniPathway"/>
</dbReference>
<dbReference type="GO" id="GO:0006592">
    <property type="term" value="P:ornithine biosynthetic process"/>
    <property type="evidence" value="ECO:0000318"/>
    <property type="project" value="GO_Central"/>
</dbReference>
<dbReference type="CDD" id="cd08012">
    <property type="entry name" value="M20_ArgE-related"/>
    <property type="match status" value="1"/>
</dbReference>
<dbReference type="FunFam" id="3.40.630.10:FF:000119">
    <property type="entry name" value="Acetylornithine deacetylase, putative"/>
    <property type="match status" value="1"/>
</dbReference>
<dbReference type="Gene3D" id="3.30.70.360">
    <property type="match status" value="1"/>
</dbReference>
<dbReference type="Gene3D" id="3.40.630.10">
    <property type="entry name" value="Zn peptidases"/>
    <property type="match status" value="1"/>
</dbReference>
<dbReference type="InterPro" id="IPR036264">
    <property type="entry name" value="Bact_exopeptidase_dim_dom"/>
</dbReference>
<dbReference type="InterPro" id="IPR002933">
    <property type="entry name" value="Peptidase_M20"/>
</dbReference>
<dbReference type="InterPro" id="IPR011650">
    <property type="entry name" value="Peptidase_M20_dimer"/>
</dbReference>
<dbReference type="InterPro" id="IPR050072">
    <property type="entry name" value="Peptidase_M20A"/>
</dbReference>
<dbReference type="PANTHER" id="PTHR43808">
    <property type="entry name" value="ACETYLORNITHINE DEACETYLASE"/>
    <property type="match status" value="1"/>
</dbReference>
<dbReference type="PANTHER" id="PTHR43808:SF3">
    <property type="entry name" value="ACETYLORNITHINE DEACETYLASE"/>
    <property type="match status" value="1"/>
</dbReference>
<dbReference type="Pfam" id="PF07687">
    <property type="entry name" value="M20_dimer"/>
    <property type="match status" value="1"/>
</dbReference>
<dbReference type="Pfam" id="PF01546">
    <property type="entry name" value="Peptidase_M20"/>
    <property type="match status" value="1"/>
</dbReference>
<dbReference type="SUPFAM" id="SSF55031">
    <property type="entry name" value="Bacterial exopeptidase dimerisation domain"/>
    <property type="match status" value="1"/>
</dbReference>
<dbReference type="SUPFAM" id="SSF53187">
    <property type="entry name" value="Zn-dependent exopeptidases"/>
    <property type="match status" value="1"/>
</dbReference>
<gene>
    <name type="primary">argE</name>
    <name type="synonym">aodD</name>
    <name type="ORF">DDB_G0267380</name>
</gene>
<proteinExistence type="evidence at protein level"/>
<reference key="1">
    <citation type="submission" date="1995-04" db="EMBL/GenBank/DDBJ databases">
        <title>Molecular cloning and sequence analysis of a member of the argE/dapE/Acy1/CPG2/yscS protein family in Dictyostelium discoideum.</title>
        <authorList>
            <person name="Lu C."/>
            <person name="Mann K."/>
            <person name="Marriott G."/>
        </authorList>
    </citation>
    <scope>NUCLEOTIDE SEQUENCE [MRNA]</scope>
    <source>
        <strain>AX3</strain>
    </source>
</reference>
<reference key="2">
    <citation type="journal article" date="2005" name="Nature">
        <title>The genome of the social amoeba Dictyostelium discoideum.</title>
        <authorList>
            <person name="Eichinger L."/>
            <person name="Pachebat J.A."/>
            <person name="Gloeckner G."/>
            <person name="Rajandream M.A."/>
            <person name="Sucgang R."/>
            <person name="Berriman M."/>
            <person name="Song J."/>
            <person name="Olsen R."/>
            <person name="Szafranski K."/>
            <person name="Xu Q."/>
            <person name="Tunggal B."/>
            <person name="Kummerfeld S."/>
            <person name="Madera M."/>
            <person name="Konfortov B.A."/>
            <person name="Rivero F."/>
            <person name="Bankier A.T."/>
            <person name="Lehmann R."/>
            <person name="Hamlin N."/>
            <person name="Davies R."/>
            <person name="Gaudet P."/>
            <person name="Fey P."/>
            <person name="Pilcher K."/>
            <person name="Chen G."/>
            <person name="Saunders D."/>
            <person name="Sodergren E.J."/>
            <person name="Davis P."/>
            <person name="Kerhornou A."/>
            <person name="Nie X."/>
            <person name="Hall N."/>
            <person name="Anjard C."/>
            <person name="Hemphill L."/>
            <person name="Bason N."/>
            <person name="Farbrother P."/>
            <person name="Desany B."/>
            <person name="Just E."/>
            <person name="Morio T."/>
            <person name="Rost R."/>
            <person name="Churcher C.M."/>
            <person name="Cooper J."/>
            <person name="Haydock S."/>
            <person name="van Driessche N."/>
            <person name="Cronin A."/>
            <person name="Goodhead I."/>
            <person name="Muzny D.M."/>
            <person name="Mourier T."/>
            <person name="Pain A."/>
            <person name="Lu M."/>
            <person name="Harper D."/>
            <person name="Lindsay R."/>
            <person name="Hauser H."/>
            <person name="James K.D."/>
            <person name="Quiles M."/>
            <person name="Madan Babu M."/>
            <person name="Saito T."/>
            <person name="Buchrieser C."/>
            <person name="Wardroper A."/>
            <person name="Felder M."/>
            <person name="Thangavelu M."/>
            <person name="Johnson D."/>
            <person name="Knights A."/>
            <person name="Loulseged H."/>
            <person name="Mungall K.L."/>
            <person name="Oliver K."/>
            <person name="Price C."/>
            <person name="Quail M.A."/>
            <person name="Urushihara H."/>
            <person name="Hernandez J."/>
            <person name="Rabbinowitsch E."/>
            <person name="Steffen D."/>
            <person name="Sanders M."/>
            <person name="Ma J."/>
            <person name="Kohara Y."/>
            <person name="Sharp S."/>
            <person name="Simmonds M.N."/>
            <person name="Spiegler S."/>
            <person name="Tivey A."/>
            <person name="Sugano S."/>
            <person name="White B."/>
            <person name="Walker D."/>
            <person name="Woodward J.R."/>
            <person name="Winckler T."/>
            <person name="Tanaka Y."/>
            <person name="Shaulsky G."/>
            <person name="Schleicher M."/>
            <person name="Weinstock G.M."/>
            <person name="Rosenthal A."/>
            <person name="Cox E.C."/>
            <person name="Chisholm R.L."/>
            <person name="Gibbs R.A."/>
            <person name="Loomis W.F."/>
            <person name="Platzer M."/>
            <person name="Kay R.R."/>
            <person name="Williams J.G."/>
            <person name="Dear P.H."/>
            <person name="Noegel A.A."/>
            <person name="Barrell B.G."/>
            <person name="Kuspa A."/>
        </authorList>
    </citation>
    <scope>NUCLEOTIDE SEQUENCE [LARGE SCALE GENOMIC DNA]</scope>
    <source>
        <strain>AX4</strain>
    </source>
</reference>
<reference key="3">
    <citation type="journal article" date="2002" name="Development">
        <title>A transcriptional profile of multicellular development in Dictyostelium discoideum.</title>
        <authorList>
            <person name="Van Driessche N."/>
            <person name="Shaw C."/>
            <person name="Katoh M."/>
            <person name="Morio T."/>
            <person name="Sucgang R."/>
            <person name="Ibarra M."/>
            <person name="Kuwayama H."/>
            <person name="Saito T."/>
            <person name="Urushihara H."/>
            <person name="Maeda M."/>
            <person name="Takeuchi I."/>
            <person name="Ochiai H."/>
            <person name="Eaton W."/>
            <person name="Tollett J."/>
            <person name="Halter J."/>
            <person name="Kuspa A."/>
            <person name="Tanaka Y."/>
            <person name="Shaulsky G."/>
        </authorList>
    </citation>
    <scope>DEVELOPMENTAL STAGE</scope>
</reference>
<reference key="4">
    <citation type="journal article" date="2003" name="Eukaryot. Cell">
        <title>Genome-wide expression analyses of gene regulation during early development of Dictyostelium discoideum.</title>
        <authorList>
            <person name="Iranfar N."/>
            <person name="Fuller D."/>
            <person name="Loomis W.F."/>
        </authorList>
    </citation>
    <scope>DEVELOPMENTAL STAGE</scope>
</reference>
<reference key="5">
    <citation type="journal article" date="2006" name="Mol. Cell. Proteomics">
        <title>Proteomics fingerprinting of phagosome maturation and evidence for the role of a Galpha during uptake.</title>
        <authorList>
            <person name="Gotthardt D."/>
            <person name="Blancheteau V."/>
            <person name="Bosserhoff A."/>
            <person name="Ruppert T."/>
            <person name="Delorenzi M."/>
            <person name="Soldati T."/>
        </authorList>
    </citation>
    <scope>IDENTIFICATION BY MASS SPECTROMETRY [LARGE SCALE ANALYSIS]</scope>
    <source>
        <strain>AX2</strain>
    </source>
</reference>
<organism>
    <name type="scientific">Dictyostelium discoideum</name>
    <name type="common">Social amoeba</name>
    <dbReference type="NCBI Taxonomy" id="44689"/>
    <lineage>
        <taxon>Eukaryota</taxon>
        <taxon>Amoebozoa</taxon>
        <taxon>Evosea</taxon>
        <taxon>Eumycetozoa</taxon>
        <taxon>Dictyostelia</taxon>
        <taxon>Dictyosteliales</taxon>
        <taxon>Dictyosteliaceae</taxon>
        <taxon>Dictyostelium</taxon>
    </lineage>
</organism>